<gene>
    <name evidence="1" type="primary">hemE</name>
    <name type="ordered locus">sce8628</name>
</gene>
<organism>
    <name type="scientific">Sorangium cellulosum (strain So ce56)</name>
    <name type="common">Polyangium cellulosum (strain So ce56)</name>
    <dbReference type="NCBI Taxonomy" id="448385"/>
    <lineage>
        <taxon>Bacteria</taxon>
        <taxon>Pseudomonadati</taxon>
        <taxon>Myxococcota</taxon>
        <taxon>Polyangia</taxon>
        <taxon>Polyangiales</taxon>
        <taxon>Polyangiaceae</taxon>
        <taxon>Sorangium</taxon>
    </lineage>
</organism>
<keyword id="KW-0963">Cytoplasm</keyword>
<keyword id="KW-0210">Decarboxylase</keyword>
<keyword id="KW-0456">Lyase</keyword>
<keyword id="KW-0627">Porphyrin biosynthesis</keyword>
<keyword id="KW-1185">Reference proteome</keyword>
<proteinExistence type="inferred from homology"/>
<dbReference type="EC" id="4.1.1.37" evidence="1"/>
<dbReference type="EMBL" id="AM746676">
    <property type="protein sequence ID" value="CAN98798.1"/>
    <property type="molecule type" value="Genomic_DNA"/>
</dbReference>
<dbReference type="RefSeq" id="WP_012241237.1">
    <property type="nucleotide sequence ID" value="NC_010162.1"/>
</dbReference>
<dbReference type="SMR" id="A9FZW7"/>
<dbReference type="STRING" id="448385.sce8628"/>
<dbReference type="KEGG" id="scl:sce8628"/>
<dbReference type="eggNOG" id="COG0407">
    <property type="taxonomic scope" value="Bacteria"/>
</dbReference>
<dbReference type="HOGENOM" id="CLU_040933_0_1_7"/>
<dbReference type="OrthoDB" id="9806656at2"/>
<dbReference type="BioCyc" id="SCEL448385:SCE_RS44210-MONOMER"/>
<dbReference type="UniPathway" id="UPA00251">
    <property type="reaction ID" value="UER00321"/>
</dbReference>
<dbReference type="Proteomes" id="UP000002139">
    <property type="component" value="Chromosome"/>
</dbReference>
<dbReference type="GO" id="GO:0005829">
    <property type="term" value="C:cytosol"/>
    <property type="evidence" value="ECO:0007669"/>
    <property type="project" value="TreeGrafter"/>
</dbReference>
<dbReference type="GO" id="GO:0004853">
    <property type="term" value="F:uroporphyrinogen decarboxylase activity"/>
    <property type="evidence" value="ECO:0007669"/>
    <property type="project" value="UniProtKB-UniRule"/>
</dbReference>
<dbReference type="GO" id="GO:0006782">
    <property type="term" value="P:protoporphyrinogen IX biosynthetic process"/>
    <property type="evidence" value="ECO:0007669"/>
    <property type="project" value="UniProtKB-UniRule"/>
</dbReference>
<dbReference type="CDD" id="cd00717">
    <property type="entry name" value="URO-D"/>
    <property type="match status" value="1"/>
</dbReference>
<dbReference type="FunFam" id="3.20.20.210:FF:000008">
    <property type="entry name" value="Uroporphyrinogen decarboxylase"/>
    <property type="match status" value="1"/>
</dbReference>
<dbReference type="Gene3D" id="3.20.20.210">
    <property type="match status" value="1"/>
</dbReference>
<dbReference type="HAMAP" id="MF_00218">
    <property type="entry name" value="URO_D"/>
    <property type="match status" value="1"/>
</dbReference>
<dbReference type="InterPro" id="IPR038071">
    <property type="entry name" value="UROD/MetE-like_sf"/>
</dbReference>
<dbReference type="InterPro" id="IPR006361">
    <property type="entry name" value="Uroporphyrinogen_deCO2ase_HemE"/>
</dbReference>
<dbReference type="InterPro" id="IPR000257">
    <property type="entry name" value="Uroporphyrinogen_deCOase"/>
</dbReference>
<dbReference type="NCBIfam" id="TIGR01464">
    <property type="entry name" value="hemE"/>
    <property type="match status" value="1"/>
</dbReference>
<dbReference type="PANTHER" id="PTHR21091">
    <property type="entry name" value="METHYLTETRAHYDROFOLATE:HOMOCYSTEINE METHYLTRANSFERASE RELATED"/>
    <property type="match status" value="1"/>
</dbReference>
<dbReference type="PANTHER" id="PTHR21091:SF169">
    <property type="entry name" value="UROPORPHYRINOGEN DECARBOXYLASE"/>
    <property type="match status" value="1"/>
</dbReference>
<dbReference type="Pfam" id="PF01208">
    <property type="entry name" value="URO-D"/>
    <property type="match status" value="1"/>
</dbReference>
<dbReference type="SUPFAM" id="SSF51726">
    <property type="entry name" value="UROD/MetE-like"/>
    <property type="match status" value="1"/>
</dbReference>
<dbReference type="PROSITE" id="PS00906">
    <property type="entry name" value="UROD_1"/>
    <property type="match status" value="1"/>
</dbReference>
<dbReference type="PROSITE" id="PS00907">
    <property type="entry name" value="UROD_2"/>
    <property type="match status" value="1"/>
</dbReference>
<protein>
    <recommendedName>
        <fullName evidence="1">Uroporphyrinogen decarboxylase</fullName>
        <shortName evidence="1">UPD</shortName>
        <shortName evidence="1">URO-D</shortName>
        <ecNumber evidence="1">4.1.1.37</ecNumber>
    </recommendedName>
</protein>
<reference key="1">
    <citation type="journal article" date="2007" name="Nat. Biotechnol.">
        <title>Complete genome sequence of the myxobacterium Sorangium cellulosum.</title>
        <authorList>
            <person name="Schneiker S."/>
            <person name="Perlova O."/>
            <person name="Kaiser O."/>
            <person name="Gerth K."/>
            <person name="Alici A."/>
            <person name="Altmeyer M.O."/>
            <person name="Bartels D."/>
            <person name="Bekel T."/>
            <person name="Beyer S."/>
            <person name="Bode E."/>
            <person name="Bode H.B."/>
            <person name="Bolten C.J."/>
            <person name="Choudhuri J.V."/>
            <person name="Doss S."/>
            <person name="Elnakady Y.A."/>
            <person name="Frank B."/>
            <person name="Gaigalat L."/>
            <person name="Goesmann A."/>
            <person name="Groeger C."/>
            <person name="Gross F."/>
            <person name="Jelsbak L."/>
            <person name="Jelsbak L."/>
            <person name="Kalinowski J."/>
            <person name="Kegler C."/>
            <person name="Knauber T."/>
            <person name="Konietzny S."/>
            <person name="Kopp M."/>
            <person name="Krause L."/>
            <person name="Krug D."/>
            <person name="Linke B."/>
            <person name="Mahmud T."/>
            <person name="Martinez-Arias R."/>
            <person name="McHardy A.C."/>
            <person name="Merai M."/>
            <person name="Meyer F."/>
            <person name="Mormann S."/>
            <person name="Munoz-Dorado J."/>
            <person name="Perez J."/>
            <person name="Pradella S."/>
            <person name="Rachid S."/>
            <person name="Raddatz G."/>
            <person name="Rosenau F."/>
            <person name="Rueckert C."/>
            <person name="Sasse F."/>
            <person name="Scharfe M."/>
            <person name="Schuster S.C."/>
            <person name="Suen G."/>
            <person name="Treuner-Lange A."/>
            <person name="Velicer G.J."/>
            <person name="Vorholter F.-J."/>
            <person name="Weissman K.J."/>
            <person name="Welch R.D."/>
            <person name="Wenzel S.C."/>
            <person name="Whitworth D.E."/>
            <person name="Wilhelm S."/>
            <person name="Wittmann C."/>
            <person name="Bloecker H."/>
            <person name="Puehler A."/>
            <person name="Mueller R."/>
        </authorList>
    </citation>
    <scope>NUCLEOTIDE SEQUENCE [LARGE SCALE GENOMIC DNA]</scope>
    <source>
        <strain>So ce56</strain>
    </source>
</reference>
<sequence length="349" mass="38876">MHDRFLRACRREPTDVTPVWFMRQAGRYMAEYRELRKKYTLLEICKTPELALEVTLQPLRLGMDAAILFADILLPLEPMGAPFEFAKGEGPVIHEPVRDRAGIERLRVFEPEEGLGYVLDAVRLIRKELDGKTPLIGFAGAPFTMASYLVEGGKSSDYRLTKQLMWSDPEAWSALMGKISEVVRRLLRAQVAAGAQAVQLFDSWVGSLSIDDYREHVQPHVRYILRDLEATGVPVIHFGTNTGALLEAQRDAGGTVIGVDWRTPLDKAWQRVGYDRAVQGNLDPLLLCAPRAVAERRARAVLEEAGGRAGHIFNLGHGIIPETPVDTVKAVIDLVHSIPRASLQGEPDR</sequence>
<feature type="chain" id="PRO_1000078091" description="Uroporphyrinogen decarboxylase">
    <location>
        <begin position="1"/>
        <end position="349"/>
    </location>
</feature>
<feature type="binding site" evidence="1">
    <location>
        <begin position="23"/>
        <end position="27"/>
    </location>
    <ligand>
        <name>substrate</name>
    </ligand>
</feature>
<feature type="binding site" evidence="1">
    <location>
        <position position="71"/>
    </location>
    <ligand>
        <name>substrate</name>
    </ligand>
</feature>
<feature type="binding site" evidence="1">
    <location>
        <position position="148"/>
    </location>
    <ligand>
        <name>substrate</name>
    </ligand>
</feature>
<feature type="binding site" evidence="1">
    <location>
        <position position="203"/>
    </location>
    <ligand>
        <name>substrate</name>
    </ligand>
</feature>
<feature type="binding site" evidence="1">
    <location>
        <position position="317"/>
    </location>
    <ligand>
        <name>substrate</name>
    </ligand>
</feature>
<feature type="site" description="Transition state stabilizer" evidence="1">
    <location>
        <position position="71"/>
    </location>
</feature>
<comment type="function">
    <text evidence="1">Catalyzes the decarboxylation of four acetate groups of uroporphyrinogen-III to yield coproporphyrinogen-III.</text>
</comment>
<comment type="catalytic activity">
    <reaction evidence="1">
        <text>uroporphyrinogen III + 4 H(+) = coproporphyrinogen III + 4 CO2</text>
        <dbReference type="Rhea" id="RHEA:19865"/>
        <dbReference type="ChEBI" id="CHEBI:15378"/>
        <dbReference type="ChEBI" id="CHEBI:16526"/>
        <dbReference type="ChEBI" id="CHEBI:57308"/>
        <dbReference type="ChEBI" id="CHEBI:57309"/>
        <dbReference type="EC" id="4.1.1.37"/>
    </reaction>
</comment>
<comment type="pathway">
    <text evidence="1">Porphyrin-containing compound metabolism; protoporphyrin-IX biosynthesis; coproporphyrinogen-III from 5-aminolevulinate: step 4/4.</text>
</comment>
<comment type="subunit">
    <text evidence="1">Homodimer.</text>
</comment>
<comment type="subcellular location">
    <subcellularLocation>
        <location evidence="1">Cytoplasm</location>
    </subcellularLocation>
</comment>
<comment type="similarity">
    <text evidence="1">Belongs to the uroporphyrinogen decarboxylase family.</text>
</comment>
<name>DCUP_SORC5</name>
<accession>A9FZW7</accession>
<evidence type="ECO:0000255" key="1">
    <source>
        <dbReference type="HAMAP-Rule" id="MF_00218"/>
    </source>
</evidence>